<feature type="chain" id="PRO_0000382261" description="Glutamate-1-semialdehyde 2,1-aminomutase 1">
    <location>
        <begin position="1"/>
        <end position="434"/>
    </location>
</feature>
<feature type="modified residue" description="N6-(pyridoxal phosphate)lysine" evidence="1">
    <location>
        <position position="270"/>
    </location>
</feature>
<accession>C3LHA0</accession>
<dbReference type="EC" id="5.4.3.8" evidence="1"/>
<dbReference type="EMBL" id="CP001215">
    <property type="protein sequence ID" value="ACP15532.1"/>
    <property type="molecule type" value="Genomic_DNA"/>
</dbReference>
<dbReference type="RefSeq" id="WP_000260529.1">
    <property type="nucleotide sequence ID" value="NC_012581.1"/>
</dbReference>
<dbReference type="SMR" id="C3LHA0"/>
<dbReference type="KEGG" id="bah:BAMEG_4074"/>
<dbReference type="HOGENOM" id="CLU_016922_1_5_9"/>
<dbReference type="UniPathway" id="UPA00251">
    <property type="reaction ID" value="UER00317"/>
</dbReference>
<dbReference type="GO" id="GO:0005737">
    <property type="term" value="C:cytoplasm"/>
    <property type="evidence" value="ECO:0007669"/>
    <property type="project" value="UniProtKB-SubCell"/>
</dbReference>
<dbReference type="GO" id="GO:0042286">
    <property type="term" value="F:glutamate-1-semialdehyde 2,1-aminomutase activity"/>
    <property type="evidence" value="ECO:0007669"/>
    <property type="project" value="UniProtKB-UniRule"/>
</dbReference>
<dbReference type="GO" id="GO:0030170">
    <property type="term" value="F:pyridoxal phosphate binding"/>
    <property type="evidence" value="ECO:0007669"/>
    <property type="project" value="InterPro"/>
</dbReference>
<dbReference type="GO" id="GO:0008483">
    <property type="term" value="F:transaminase activity"/>
    <property type="evidence" value="ECO:0007669"/>
    <property type="project" value="InterPro"/>
</dbReference>
<dbReference type="GO" id="GO:0006782">
    <property type="term" value="P:protoporphyrinogen IX biosynthetic process"/>
    <property type="evidence" value="ECO:0007669"/>
    <property type="project" value="UniProtKB-UniRule"/>
</dbReference>
<dbReference type="CDD" id="cd00610">
    <property type="entry name" value="OAT_like"/>
    <property type="match status" value="1"/>
</dbReference>
<dbReference type="FunFam" id="3.40.640.10:FF:000021">
    <property type="entry name" value="Glutamate-1-semialdehyde 2,1-aminomutase"/>
    <property type="match status" value="1"/>
</dbReference>
<dbReference type="Gene3D" id="3.90.1150.10">
    <property type="entry name" value="Aspartate Aminotransferase, domain 1"/>
    <property type="match status" value="1"/>
</dbReference>
<dbReference type="Gene3D" id="3.40.640.10">
    <property type="entry name" value="Type I PLP-dependent aspartate aminotransferase-like (Major domain)"/>
    <property type="match status" value="1"/>
</dbReference>
<dbReference type="HAMAP" id="MF_00375">
    <property type="entry name" value="HemL_aminotrans_3"/>
    <property type="match status" value="1"/>
</dbReference>
<dbReference type="InterPro" id="IPR004639">
    <property type="entry name" value="4pyrrol_synth_GluAld_NH2Trfase"/>
</dbReference>
<dbReference type="InterPro" id="IPR005814">
    <property type="entry name" value="Aminotrans_3"/>
</dbReference>
<dbReference type="InterPro" id="IPR049704">
    <property type="entry name" value="Aminotrans_3_PPA_site"/>
</dbReference>
<dbReference type="InterPro" id="IPR015424">
    <property type="entry name" value="PyrdxlP-dep_Trfase"/>
</dbReference>
<dbReference type="InterPro" id="IPR015421">
    <property type="entry name" value="PyrdxlP-dep_Trfase_major"/>
</dbReference>
<dbReference type="InterPro" id="IPR015422">
    <property type="entry name" value="PyrdxlP-dep_Trfase_small"/>
</dbReference>
<dbReference type="NCBIfam" id="TIGR00713">
    <property type="entry name" value="hemL"/>
    <property type="match status" value="1"/>
</dbReference>
<dbReference type="NCBIfam" id="NF000818">
    <property type="entry name" value="PRK00062.1"/>
    <property type="match status" value="1"/>
</dbReference>
<dbReference type="NCBIfam" id="NF009055">
    <property type="entry name" value="PRK12389.1"/>
    <property type="match status" value="1"/>
</dbReference>
<dbReference type="PANTHER" id="PTHR43713">
    <property type="entry name" value="GLUTAMATE-1-SEMIALDEHYDE 2,1-AMINOMUTASE"/>
    <property type="match status" value="1"/>
</dbReference>
<dbReference type="PANTHER" id="PTHR43713:SF1">
    <property type="entry name" value="GLUTAMATE-1-SEMIALDEHYDE 2,1-AMINOMUTASE 2"/>
    <property type="match status" value="1"/>
</dbReference>
<dbReference type="Pfam" id="PF00202">
    <property type="entry name" value="Aminotran_3"/>
    <property type="match status" value="1"/>
</dbReference>
<dbReference type="SUPFAM" id="SSF53383">
    <property type="entry name" value="PLP-dependent transferases"/>
    <property type="match status" value="1"/>
</dbReference>
<dbReference type="PROSITE" id="PS00600">
    <property type="entry name" value="AA_TRANSFER_CLASS_3"/>
    <property type="match status" value="1"/>
</dbReference>
<comment type="catalytic activity">
    <reaction evidence="1">
        <text>(S)-4-amino-5-oxopentanoate = 5-aminolevulinate</text>
        <dbReference type="Rhea" id="RHEA:14265"/>
        <dbReference type="ChEBI" id="CHEBI:57501"/>
        <dbReference type="ChEBI" id="CHEBI:356416"/>
        <dbReference type="EC" id="5.4.3.8"/>
    </reaction>
</comment>
<comment type="cofactor">
    <cofactor evidence="1">
        <name>pyridoxal 5'-phosphate</name>
        <dbReference type="ChEBI" id="CHEBI:597326"/>
    </cofactor>
</comment>
<comment type="pathway">
    <text evidence="1">Porphyrin-containing compound metabolism; protoporphyrin-IX biosynthesis; 5-aminolevulinate from L-glutamyl-tRNA(Glu): step 2/2.</text>
</comment>
<comment type="subunit">
    <text evidence="1">Homodimer.</text>
</comment>
<comment type="subcellular location">
    <subcellularLocation>
        <location evidence="1">Cytoplasm</location>
    </subcellularLocation>
</comment>
<comment type="similarity">
    <text evidence="1">Belongs to the class-III pyridoxal-phosphate-dependent aminotransferase family. HemL subfamily.</text>
</comment>
<keyword id="KW-0963">Cytoplasm</keyword>
<keyword id="KW-0413">Isomerase</keyword>
<keyword id="KW-0627">Porphyrin biosynthesis</keyword>
<keyword id="KW-0663">Pyridoxal phosphate</keyword>
<proteinExistence type="inferred from homology"/>
<name>GSA1_BACAC</name>
<sequence>MVVKFTKSEALHKEALEHIVGGVNSPSRSFKAVGGGAPIAMERGKGAYFWDVDGNKYIDYLAAYGPIITGHAHPHITKAITTAAENGVLYGTPTALEVKFAKMLKEAMPALDKVRFVNSGTEAVMTTIRVARAYTGRTKIMKFAGCYHGHSDLVLVAAGSGPSTLGTPDSAGVPQSIAQEVITVPFNNVETLKEALDKWGHEVAAILVEPIVGNFGIVEPKPGFLEKVNELVHEAGALVIYDEVITAFRFMYGGAQDLLGVTPDLTALGKVIGGGLPIGAYGGKKEIMEQVAPLGPAYQAGTMAGNPASMASGIACLEVLQQEGLYEKLDELGAMLEKGILEQAAKHNIDITLNRLKGALTVYFTTNTIEDYDAAQNTDGEMFGKFFKLMLQEGVNLAPSKYEAWFLTTEHTKEDIEYTIEAVGRAFAALADNK</sequence>
<reference key="1">
    <citation type="submission" date="2008-10" db="EMBL/GenBank/DDBJ databases">
        <title>Genome sequence of Bacillus anthracis str. CDC 684.</title>
        <authorList>
            <person name="Dodson R.J."/>
            <person name="Munk A.C."/>
            <person name="Brettin T."/>
            <person name="Bruce D."/>
            <person name="Detter C."/>
            <person name="Tapia R."/>
            <person name="Han C."/>
            <person name="Sutton G."/>
            <person name="Sims D."/>
        </authorList>
    </citation>
    <scope>NUCLEOTIDE SEQUENCE [LARGE SCALE GENOMIC DNA]</scope>
    <source>
        <strain>CDC 684 / NRRL 3495</strain>
    </source>
</reference>
<gene>
    <name evidence="1" type="primary">hemL1</name>
    <name type="ordered locus">BAMEG_4074</name>
</gene>
<protein>
    <recommendedName>
        <fullName evidence="1">Glutamate-1-semialdehyde 2,1-aminomutase 1</fullName>
        <shortName evidence="1">GSA 1</shortName>
        <ecNumber evidence="1">5.4.3.8</ecNumber>
    </recommendedName>
    <alternativeName>
        <fullName evidence="1">Glutamate-1-semialdehyde aminotransferase 1</fullName>
        <shortName evidence="1">GSA-AT 1</shortName>
    </alternativeName>
</protein>
<evidence type="ECO:0000255" key="1">
    <source>
        <dbReference type="HAMAP-Rule" id="MF_00375"/>
    </source>
</evidence>
<organism>
    <name type="scientific">Bacillus anthracis (strain CDC 684 / NRRL 3495)</name>
    <dbReference type="NCBI Taxonomy" id="568206"/>
    <lineage>
        <taxon>Bacteria</taxon>
        <taxon>Bacillati</taxon>
        <taxon>Bacillota</taxon>
        <taxon>Bacilli</taxon>
        <taxon>Bacillales</taxon>
        <taxon>Bacillaceae</taxon>
        <taxon>Bacillus</taxon>
        <taxon>Bacillus cereus group</taxon>
    </lineage>
</organism>